<keyword id="KW-0027">Amidation</keyword>
<keyword id="KW-0878">Amphibian defense peptide</keyword>
<keyword id="KW-0929">Antimicrobial</keyword>
<keyword id="KW-0903">Direct protein sequencing</keyword>
<keyword id="KW-0964">Secreted</keyword>
<feature type="peptide" id="PRO_0000404638" description="Hyposin-J1" evidence="2">
    <location>
        <begin position="1"/>
        <end position="12"/>
    </location>
</feature>
<feature type="modified residue" description="Lysine amide" evidence="2">
    <location>
        <position position="12"/>
    </location>
</feature>
<feature type="unsure residue" description="L or I" evidence="2">
    <location>
        <position position="5"/>
    </location>
</feature>
<feature type="unsure residue" description="I or L" evidence="2">
    <location>
        <position position="6"/>
    </location>
</feature>
<feature type="unsure residue" description="K or Q" evidence="2">
    <location>
        <position position="10"/>
    </location>
</feature>
<feature type="unsure residue" description="K or Q" evidence="2">
    <location>
        <position position="12"/>
    </location>
</feature>
<organism>
    <name type="scientific">Phasmahyla jandaia</name>
    <name type="common">Jandaia leaf frog</name>
    <name type="synonym">Phyllomedusa jandaia</name>
    <dbReference type="NCBI Taxonomy" id="762504"/>
    <lineage>
        <taxon>Eukaryota</taxon>
        <taxon>Metazoa</taxon>
        <taxon>Chordata</taxon>
        <taxon>Craniata</taxon>
        <taxon>Vertebrata</taxon>
        <taxon>Euteleostomi</taxon>
        <taxon>Amphibia</taxon>
        <taxon>Batrachia</taxon>
        <taxon>Anura</taxon>
        <taxon>Neobatrachia</taxon>
        <taxon>Hyloidea</taxon>
        <taxon>Hylidae</taxon>
        <taxon>Phyllomedusinae</taxon>
        <taxon>Phasmahyla</taxon>
    </lineage>
</organism>
<proteinExistence type="evidence at protein level"/>
<accession>P86613</accession>
<protein>
    <recommendedName>
        <fullName evidence="3">Hyposin-J1</fullName>
        <shortName evidence="3">HPS-J1</shortName>
    </recommendedName>
</protein>
<name>HPS1_PHAJA</name>
<reference evidence="4" key="1">
    <citation type="journal article" date="2011" name="Toxicon">
        <title>Peptidomic dissection of the skin secretion of Phasmahyla jandaia (Bokermann and Sazima, 1978) (Anura, Hylidae, Phyllomedusinae).</title>
        <authorList>
            <person name="Rates B."/>
            <person name="Silva L.P."/>
            <person name="Ireno I.C."/>
            <person name="Leite F.S."/>
            <person name="Borges M.H."/>
            <person name="Bloch C. Jr."/>
            <person name="De Lima M.E."/>
            <person name="Pimenta A.M."/>
        </authorList>
    </citation>
    <scope>PROTEIN SEQUENCE</scope>
    <scope>SUBCELLULAR LOCATION</scope>
    <scope>TISSUE SPECIFICITY</scope>
    <scope>MASS SPECTROMETRY</scope>
    <scope>AMIDATION AT LYS-12</scope>
    <source>
        <tissue evidence="2">Skin secretion</tissue>
    </source>
</reference>
<evidence type="ECO:0000250" key="1">
    <source>
        <dbReference type="UniProtKB" id="P84524"/>
    </source>
</evidence>
<evidence type="ECO:0000269" key="2">
    <source>
    </source>
</evidence>
<evidence type="ECO:0000303" key="3">
    <source>
    </source>
</evidence>
<evidence type="ECO:0000305" key="4"/>
<comment type="function">
    <text evidence="1">Has antimicrobial activity.</text>
</comment>
<comment type="subcellular location">
    <subcellularLocation>
        <location evidence="2">Secreted</location>
    </subcellularLocation>
</comment>
<comment type="tissue specificity">
    <text evidence="2">Expressed by the skin glands.</text>
</comment>
<comment type="mass spectrometry" mass="1383.8" method="MALDI" evidence="2"/>
<comment type="similarity">
    <text evidence="4">Belongs to the frog skin active peptide (FSAP) family. Hyposin subfamily.</text>
</comment>
<dbReference type="GO" id="GO:0005576">
    <property type="term" value="C:extracellular region"/>
    <property type="evidence" value="ECO:0007669"/>
    <property type="project" value="UniProtKB-SubCell"/>
</dbReference>
<dbReference type="GO" id="GO:0006952">
    <property type="term" value="P:defense response"/>
    <property type="evidence" value="ECO:0007669"/>
    <property type="project" value="UniProtKB-KW"/>
</dbReference>
<sequence length="12" mass="1386">FRPALIVRTKGK</sequence>